<accession>B5E4K5</accession>
<reference key="1">
    <citation type="journal article" date="2001" name="Microb. Drug Resist.">
        <title>Annotated draft genomic sequence from a Streptococcus pneumoniae type 19F clinical isolate.</title>
        <authorList>
            <person name="Dopazo J."/>
            <person name="Mendoza A."/>
            <person name="Herrero J."/>
            <person name="Caldara F."/>
            <person name="Humbert Y."/>
            <person name="Friedli L."/>
            <person name="Guerrier M."/>
            <person name="Grand-Schenk E."/>
            <person name="Gandin C."/>
            <person name="de Francesco M."/>
            <person name="Polissi A."/>
            <person name="Buell G."/>
            <person name="Feger G."/>
            <person name="Garcia E."/>
            <person name="Peitsch M."/>
            <person name="Garcia-Bustos J.F."/>
        </authorList>
    </citation>
    <scope>NUCLEOTIDE SEQUENCE [LARGE SCALE GENOMIC DNA]</scope>
    <source>
        <strain>G54</strain>
    </source>
</reference>
<reference key="2">
    <citation type="submission" date="2008-03" db="EMBL/GenBank/DDBJ databases">
        <title>Pneumococcal beta glucoside metabolism investigated by whole genome comparison.</title>
        <authorList>
            <person name="Mulas L."/>
            <person name="Trappetti C."/>
            <person name="Hakenbeck R."/>
            <person name="Iannelli F."/>
            <person name="Pozzi G."/>
            <person name="Davidsen T.M."/>
            <person name="Tettelin H."/>
            <person name="Oggioni M."/>
        </authorList>
    </citation>
    <scope>NUCLEOTIDE SEQUENCE [LARGE SCALE GENOMIC DNA]</scope>
    <source>
        <strain>G54</strain>
    </source>
</reference>
<protein>
    <recommendedName>
        <fullName evidence="2">Redox-sensing transcriptional repressor Rex</fullName>
    </recommendedName>
</protein>
<feature type="chain" id="PRO_1000137333" description="Redox-sensing transcriptional repressor Rex">
    <location>
        <begin position="1"/>
        <end position="213"/>
    </location>
</feature>
<feature type="DNA-binding region" description="H-T-H motif" evidence="2">
    <location>
        <begin position="18"/>
        <end position="57"/>
    </location>
</feature>
<feature type="binding site" evidence="2">
    <location>
        <begin position="92"/>
        <end position="97"/>
    </location>
    <ligand>
        <name>NAD(+)</name>
        <dbReference type="ChEBI" id="CHEBI:57540"/>
    </ligand>
</feature>
<dbReference type="EMBL" id="CP001015">
    <property type="protein sequence ID" value="ACF56624.1"/>
    <property type="molecule type" value="Genomic_DNA"/>
</dbReference>
<dbReference type="SMR" id="B5E4K5"/>
<dbReference type="KEGG" id="spx:SPG_1011"/>
<dbReference type="HOGENOM" id="CLU_061534_1_1_9"/>
<dbReference type="GO" id="GO:0005737">
    <property type="term" value="C:cytoplasm"/>
    <property type="evidence" value="ECO:0007669"/>
    <property type="project" value="UniProtKB-SubCell"/>
</dbReference>
<dbReference type="GO" id="GO:0003677">
    <property type="term" value="F:DNA binding"/>
    <property type="evidence" value="ECO:0007669"/>
    <property type="project" value="UniProtKB-UniRule"/>
</dbReference>
<dbReference type="GO" id="GO:0003700">
    <property type="term" value="F:DNA-binding transcription factor activity"/>
    <property type="evidence" value="ECO:0007669"/>
    <property type="project" value="UniProtKB-UniRule"/>
</dbReference>
<dbReference type="GO" id="GO:0045892">
    <property type="term" value="P:negative regulation of DNA-templated transcription"/>
    <property type="evidence" value="ECO:0007669"/>
    <property type="project" value="InterPro"/>
</dbReference>
<dbReference type="GO" id="GO:0051775">
    <property type="term" value="P:response to redox state"/>
    <property type="evidence" value="ECO:0007669"/>
    <property type="project" value="InterPro"/>
</dbReference>
<dbReference type="Gene3D" id="3.40.50.720">
    <property type="entry name" value="NAD(P)-binding Rossmann-like Domain"/>
    <property type="match status" value="1"/>
</dbReference>
<dbReference type="Gene3D" id="1.10.10.10">
    <property type="entry name" value="Winged helix-like DNA-binding domain superfamily/Winged helix DNA-binding domain"/>
    <property type="match status" value="1"/>
</dbReference>
<dbReference type="HAMAP" id="MF_01131">
    <property type="entry name" value="Rex"/>
    <property type="match status" value="1"/>
</dbReference>
<dbReference type="InterPro" id="IPR003781">
    <property type="entry name" value="CoA-bd"/>
</dbReference>
<dbReference type="InterPro" id="IPR036291">
    <property type="entry name" value="NAD(P)-bd_dom_sf"/>
</dbReference>
<dbReference type="InterPro" id="IPR009718">
    <property type="entry name" value="Rex_DNA-bd_C_dom"/>
</dbReference>
<dbReference type="InterPro" id="IPR022876">
    <property type="entry name" value="Tscrpt_rep_Rex"/>
</dbReference>
<dbReference type="InterPro" id="IPR036388">
    <property type="entry name" value="WH-like_DNA-bd_sf"/>
</dbReference>
<dbReference type="InterPro" id="IPR036390">
    <property type="entry name" value="WH_DNA-bd_sf"/>
</dbReference>
<dbReference type="NCBIfam" id="NF003988">
    <property type="entry name" value="PRK05472.1-1"/>
    <property type="match status" value="1"/>
</dbReference>
<dbReference type="NCBIfam" id="NF003989">
    <property type="entry name" value="PRK05472.1-3"/>
    <property type="match status" value="1"/>
</dbReference>
<dbReference type="NCBIfam" id="NF003991">
    <property type="entry name" value="PRK05472.1-5"/>
    <property type="match status" value="1"/>
</dbReference>
<dbReference type="NCBIfam" id="NF003994">
    <property type="entry name" value="PRK05472.2-3"/>
    <property type="match status" value="1"/>
</dbReference>
<dbReference type="NCBIfam" id="NF003995">
    <property type="entry name" value="PRK05472.2-4"/>
    <property type="match status" value="1"/>
</dbReference>
<dbReference type="NCBIfam" id="NF003996">
    <property type="entry name" value="PRK05472.2-5"/>
    <property type="match status" value="1"/>
</dbReference>
<dbReference type="PANTHER" id="PTHR35786">
    <property type="entry name" value="REDOX-SENSING TRANSCRIPTIONAL REPRESSOR REX"/>
    <property type="match status" value="1"/>
</dbReference>
<dbReference type="PANTHER" id="PTHR35786:SF1">
    <property type="entry name" value="REDOX-SENSING TRANSCRIPTIONAL REPRESSOR REX 1"/>
    <property type="match status" value="1"/>
</dbReference>
<dbReference type="Pfam" id="PF02629">
    <property type="entry name" value="CoA_binding"/>
    <property type="match status" value="1"/>
</dbReference>
<dbReference type="Pfam" id="PF06971">
    <property type="entry name" value="Put_DNA-bind_N"/>
    <property type="match status" value="1"/>
</dbReference>
<dbReference type="SMART" id="SM00881">
    <property type="entry name" value="CoA_binding"/>
    <property type="match status" value="1"/>
</dbReference>
<dbReference type="SUPFAM" id="SSF51735">
    <property type="entry name" value="NAD(P)-binding Rossmann-fold domains"/>
    <property type="match status" value="1"/>
</dbReference>
<dbReference type="SUPFAM" id="SSF46785">
    <property type="entry name" value="Winged helix' DNA-binding domain"/>
    <property type="match status" value="1"/>
</dbReference>
<proteinExistence type="inferred from homology"/>
<evidence type="ECO:0000250" key="1">
    <source>
        <dbReference type="UniProtKB" id="Q04KJ6"/>
    </source>
</evidence>
<evidence type="ECO:0000255" key="2">
    <source>
        <dbReference type="HAMAP-Rule" id="MF_01131"/>
    </source>
</evidence>
<name>REX_STRP4</name>
<gene>
    <name evidence="2" type="primary">rex</name>
    <name type="ordered locus">SPG_1011</name>
</gene>
<organism>
    <name type="scientific">Streptococcus pneumoniae serotype 19F (strain G54)</name>
    <dbReference type="NCBI Taxonomy" id="512566"/>
    <lineage>
        <taxon>Bacteria</taxon>
        <taxon>Bacillati</taxon>
        <taxon>Bacillota</taxon>
        <taxon>Bacilli</taxon>
        <taxon>Lactobacillales</taxon>
        <taxon>Streptococcaceae</taxon>
        <taxon>Streptococcus</taxon>
    </lineage>
</organism>
<comment type="function">
    <text evidence="1 2">Modulates transcription in response to changes in cellular NADH/NAD(+) redox state (By similarity). Binds to the promoter of the aldehyde-alcohol dehydrogenase adhE gene. Functions as a redox-dependent repressor of adhE expression (By similarity).</text>
</comment>
<comment type="subunit">
    <text evidence="2">Homodimer.</text>
</comment>
<comment type="subcellular location">
    <subcellularLocation>
        <location evidence="2">Cytoplasm</location>
    </subcellularLocation>
</comment>
<comment type="similarity">
    <text evidence="2">Belongs to the transcriptional regulatory Rex family.</text>
</comment>
<sequence>MKDKQFAIPKATAKRLSLYYRIFKRFHAEKIERANSKQIAEAIGIDSATVRRDFSYFGELGRRGFGYDVKKLMTFFADLLNDNSITNVMLVGIGNMGHALLHYRFHERNKMKIIMAFDLDDHPEVGTQTPDGIPIYGISQIKDKIKDADVKTAILTVPSVKSQEVANLLVDAGVKGILSFSPVHLHLPKDVVVQYVDLTSELQTLLYFMRKED</sequence>
<keyword id="KW-0963">Cytoplasm</keyword>
<keyword id="KW-0238">DNA-binding</keyword>
<keyword id="KW-0520">NAD</keyword>
<keyword id="KW-0678">Repressor</keyword>
<keyword id="KW-0804">Transcription</keyword>
<keyword id="KW-0805">Transcription regulation</keyword>